<sequence length="152" mass="16971">MSEKYIVTWDMLQIHARKLASRLMPSEQWKGIIAVSRGGLVPGALLARELGIRHVDTVCISSYDHDNQRELKVLKRAEGDGEGFIVIDDLVDTGGTAVAIREMYPKAHFVTIFAKPAGRPLVDDYVVDIPQDTWIEQPWDMGVVFVPPISGR</sequence>
<keyword id="KW-0997">Cell inner membrane</keyword>
<keyword id="KW-1003">Cell membrane</keyword>
<keyword id="KW-0328">Glycosyltransferase</keyword>
<keyword id="KW-0460">Magnesium</keyword>
<keyword id="KW-0472">Membrane</keyword>
<keyword id="KW-0479">Metal-binding</keyword>
<keyword id="KW-0660">Purine salvage</keyword>
<keyword id="KW-0808">Transferase</keyword>
<organism>
    <name type="scientific">Escherichia coli (strain K12 / DH10B)</name>
    <dbReference type="NCBI Taxonomy" id="316385"/>
    <lineage>
        <taxon>Bacteria</taxon>
        <taxon>Pseudomonadati</taxon>
        <taxon>Pseudomonadota</taxon>
        <taxon>Gammaproteobacteria</taxon>
        <taxon>Enterobacterales</taxon>
        <taxon>Enterobacteriaceae</taxon>
        <taxon>Escherichia</taxon>
    </lineage>
</organism>
<name>XGPT_ECODH</name>
<comment type="function">
    <text evidence="1">Purine salvage pathway enzyme that catalyzes the transfer of the ribosyl-5-phosphate group from 5-phospho-alpha-D-ribose 1-diphosphate (PRPP) to the N9 position of the 6-oxopurines guanine and xanthine to form the corresponding ribonucleotides GMP (guanosine 5'-monophosphate) and XMP (xanthosine 5'-monophosphate), with the release of PPi. To a lesser extent, also acts on hypoxanthine.</text>
</comment>
<comment type="catalytic activity">
    <reaction evidence="1">
        <text>GMP + diphosphate = guanine + 5-phospho-alpha-D-ribose 1-diphosphate</text>
        <dbReference type="Rhea" id="RHEA:25424"/>
        <dbReference type="ChEBI" id="CHEBI:16235"/>
        <dbReference type="ChEBI" id="CHEBI:33019"/>
        <dbReference type="ChEBI" id="CHEBI:58017"/>
        <dbReference type="ChEBI" id="CHEBI:58115"/>
    </reaction>
    <physiologicalReaction direction="right-to-left" evidence="1">
        <dbReference type="Rhea" id="RHEA:25426"/>
    </physiologicalReaction>
</comment>
<comment type="catalytic activity">
    <reaction evidence="1">
        <text>XMP + diphosphate = xanthine + 5-phospho-alpha-D-ribose 1-diphosphate</text>
        <dbReference type="Rhea" id="RHEA:10800"/>
        <dbReference type="ChEBI" id="CHEBI:17712"/>
        <dbReference type="ChEBI" id="CHEBI:33019"/>
        <dbReference type="ChEBI" id="CHEBI:57464"/>
        <dbReference type="ChEBI" id="CHEBI:58017"/>
        <dbReference type="EC" id="2.4.2.22"/>
    </reaction>
    <physiologicalReaction direction="right-to-left" evidence="1">
        <dbReference type="Rhea" id="RHEA:10802"/>
    </physiologicalReaction>
</comment>
<comment type="catalytic activity">
    <reaction evidence="1">
        <text>IMP + diphosphate = hypoxanthine + 5-phospho-alpha-D-ribose 1-diphosphate</text>
        <dbReference type="Rhea" id="RHEA:17973"/>
        <dbReference type="ChEBI" id="CHEBI:17368"/>
        <dbReference type="ChEBI" id="CHEBI:33019"/>
        <dbReference type="ChEBI" id="CHEBI:58017"/>
        <dbReference type="ChEBI" id="CHEBI:58053"/>
    </reaction>
    <physiologicalReaction direction="right-to-left" evidence="1">
        <dbReference type="Rhea" id="RHEA:17975"/>
    </physiologicalReaction>
</comment>
<comment type="cofactor">
    <cofactor evidence="1">
        <name>Mg(2+)</name>
        <dbReference type="ChEBI" id="CHEBI:18420"/>
    </cofactor>
</comment>
<comment type="pathway">
    <text evidence="1">Purine metabolism; GMP biosynthesis via salvage pathway; GMP from guanine: step 1/1.</text>
</comment>
<comment type="pathway">
    <text evidence="1">Purine metabolism; XMP biosynthesis via salvage pathway; XMP from xanthine: step 1/1.</text>
</comment>
<comment type="subunit">
    <text evidence="1">Homotetramer.</text>
</comment>
<comment type="subcellular location">
    <subcellularLocation>
        <location evidence="1">Cell inner membrane</location>
        <topology evidence="1">Peripheral membrane protein</topology>
    </subcellularLocation>
</comment>
<comment type="similarity">
    <text evidence="1">Belongs to the purine/pyrimidine phosphoribosyltransferase family. XGPT subfamily.</text>
</comment>
<accession>B1XDY1</accession>
<reference key="1">
    <citation type="journal article" date="2008" name="J. Bacteriol.">
        <title>The complete genome sequence of Escherichia coli DH10B: insights into the biology of a laboratory workhorse.</title>
        <authorList>
            <person name="Durfee T."/>
            <person name="Nelson R."/>
            <person name="Baldwin S."/>
            <person name="Plunkett G. III"/>
            <person name="Burland V."/>
            <person name="Mau B."/>
            <person name="Petrosino J.F."/>
            <person name="Qin X."/>
            <person name="Muzny D.M."/>
            <person name="Ayele M."/>
            <person name="Gibbs R.A."/>
            <person name="Csorgo B."/>
            <person name="Posfai G."/>
            <person name="Weinstock G.M."/>
            <person name="Blattner F.R."/>
        </authorList>
    </citation>
    <scope>NUCLEOTIDE SEQUENCE [LARGE SCALE GENOMIC DNA]</scope>
    <source>
        <strain>K12 / DH10B</strain>
    </source>
</reference>
<dbReference type="EC" id="2.4.2.-" evidence="1"/>
<dbReference type="EC" id="2.4.2.22" evidence="1"/>
<dbReference type="EMBL" id="CP000948">
    <property type="protein sequence ID" value="ACB01405.1"/>
    <property type="molecule type" value="Genomic_DNA"/>
</dbReference>
<dbReference type="RefSeq" id="WP_001291990.1">
    <property type="nucleotide sequence ID" value="NC_010473.1"/>
</dbReference>
<dbReference type="SMR" id="B1XDY1"/>
<dbReference type="GeneID" id="93777155"/>
<dbReference type="KEGG" id="ecd:ECDH10B_0220"/>
<dbReference type="HOGENOM" id="CLU_080904_3_0_6"/>
<dbReference type="UniPathway" id="UPA00602">
    <property type="reaction ID" value="UER00658"/>
</dbReference>
<dbReference type="UniPathway" id="UPA00909">
    <property type="reaction ID" value="UER00887"/>
</dbReference>
<dbReference type="GO" id="GO:0005829">
    <property type="term" value="C:cytosol"/>
    <property type="evidence" value="ECO:0007669"/>
    <property type="project" value="TreeGrafter"/>
</dbReference>
<dbReference type="GO" id="GO:0005886">
    <property type="term" value="C:plasma membrane"/>
    <property type="evidence" value="ECO:0007669"/>
    <property type="project" value="UniProtKB-SubCell"/>
</dbReference>
<dbReference type="GO" id="GO:0052657">
    <property type="term" value="F:guanine phosphoribosyltransferase activity"/>
    <property type="evidence" value="ECO:0007669"/>
    <property type="project" value="RHEA"/>
</dbReference>
<dbReference type="GO" id="GO:0004422">
    <property type="term" value="F:hypoxanthine phosphoribosyltransferase activity"/>
    <property type="evidence" value="ECO:0007669"/>
    <property type="project" value="RHEA"/>
</dbReference>
<dbReference type="GO" id="GO:0000287">
    <property type="term" value="F:magnesium ion binding"/>
    <property type="evidence" value="ECO:0007669"/>
    <property type="project" value="UniProtKB-UniRule"/>
</dbReference>
<dbReference type="GO" id="GO:0000310">
    <property type="term" value="F:xanthine phosphoribosyltransferase activity"/>
    <property type="evidence" value="ECO:0007669"/>
    <property type="project" value="UniProtKB-UniRule"/>
</dbReference>
<dbReference type="GO" id="GO:0032263">
    <property type="term" value="P:GMP salvage"/>
    <property type="evidence" value="ECO:0007669"/>
    <property type="project" value="UniProtKB-UniRule"/>
</dbReference>
<dbReference type="GO" id="GO:0032264">
    <property type="term" value="P:IMP salvage"/>
    <property type="evidence" value="ECO:0007669"/>
    <property type="project" value="TreeGrafter"/>
</dbReference>
<dbReference type="GO" id="GO:0006166">
    <property type="term" value="P:purine ribonucleoside salvage"/>
    <property type="evidence" value="ECO:0007669"/>
    <property type="project" value="UniProtKB-KW"/>
</dbReference>
<dbReference type="GO" id="GO:0032265">
    <property type="term" value="P:XMP salvage"/>
    <property type="evidence" value="ECO:0007669"/>
    <property type="project" value="UniProtKB-UniRule"/>
</dbReference>
<dbReference type="CDD" id="cd06223">
    <property type="entry name" value="PRTases_typeI"/>
    <property type="match status" value="1"/>
</dbReference>
<dbReference type="FunFam" id="3.40.50.2020:FF:000009">
    <property type="entry name" value="Xanthine phosphoribosyltransferase"/>
    <property type="match status" value="1"/>
</dbReference>
<dbReference type="Gene3D" id="3.40.50.2020">
    <property type="match status" value="1"/>
</dbReference>
<dbReference type="HAMAP" id="MF_01903">
    <property type="entry name" value="XGPRT"/>
    <property type="match status" value="1"/>
</dbReference>
<dbReference type="InterPro" id="IPR000836">
    <property type="entry name" value="PRibTrfase_dom"/>
</dbReference>
<dbReference type="InterPro" id="IPR029057">
    <property type="entry name" value="PRTase-like"/>
</dbReference>
<dbReference type="InterPro" id="IPR023747">
    <property type="entry name" value="Xanthine_Guanine_PRibTrfase"/>
</dbReference>
<dbReference type="NCBIfam" id="NF006613">
    <property type="entry name" value="PRK09177.1"/>
    <property type="match status" value="1"/>
</dbReference>
<dbReference type="PANTHER" id="PTHR39563">
    <property type="entry name" value="XANTHINE PHOSPHORIBOSYLTRANSFERASE"/>
    <property type="match status" value="1"/>
</dbReference>
<dbReference type="PANTHER" id="PTHR39563:SF1">
    <property type="entry name" value="XANTHINE-GUANINE PHOSPHORIBOSYLTRANSFERASE"/>
    <property type="match status" value="1"/>
</dbReference>
<dbReference type="Pfam" id="PF00156">
    <property type="entry name" value="Pribosyltran"/>
    <property type="match status" value="1"/>
</dbReference>
<dbReference type="SUPFAM" id="SSF53271">
    <property type="entry name" value="PRTase-like"/>
    <property type="match status" value="1"/>
</dbReference>
<dbReference type="PROSITE" id="PS00103">
    <property type="entry name" value="PUR_PYR_PR_TRANSFER"/>
    <property type="match status" value="1"/>
</dbReference>
<gene>
    <name evidence="1" type="primary">gpt</name>
    <name type="ordered locus">ECDH10B_0220</name>
</gene>
<proteinExistence type="inferred from homology"/>
<evidence type="ECO:0000255" key="1">
    <source>
        <dbReference type="HAMAP-Rule" id="MF_01903"/>
    </source>
</evidence>
<protein>
    <recommendedName>
        <fullName evidence="1">Xanthine-guanine phosphoribosyltransferase</fullName>
        <shortName evidence="1">XGPRT</shortName>
        <ecNumber evidence="1">2.4.2.-</ecNumber>
        <ecNumber evidence="1">2.4.2.22</ecNumber>
    </recommendedName>
    <alternativeName>
        <fullName evidence="1">Xanthine phosphoribosyltransferase</fullName>
    </alternativeName>
</protein>
<feature type="chain" id="PRO_1000188744" description="Xanthine-guanine phosphoribosyltransferase">
    <location>
        <begin position="1"/>
        <end position="152"/>
    </location>
</feature>
<feature type="binding site" evidence="1">
    <location>
        <begin position="37"/>
        <end position="38"/>
    </location>
    <ligand>
        <name>5-phospho-alpha-D-ribose 1-diphosphate</name>
        <dbReference type="ChEBI" id="CHEBI:58017"/>
    </ligand>
</feature>
<feature type="binding site" evidence="1">
    <location>
        <position position="69"/>
    </location>
    <ligand>
        <name>5-phospho-alpha-D-ribose 1-diphosphate</name>
        <dbReference type="ChEBI" id="CHEBI:58017"/>
    </ligand>
</feature>
<feature type="binding site" evidence="1">
    <location>
        <position position="69"/>
    </location>
    <ligand>
        <name>GMP</name>
        <dbReference type="ChEBI" id="CHEBI:58115"/>
    </ligand>
</feature>
<feature type="binding site" evidence="1">
    <location>
        <begin position="88"/>
        <end position="96"/>
    </location>
    <ligand>
        <name>5-phospho-alpha-D-ribose 1-diphosphate</name>
        <dbReference type="ChEBI" id="CHEBI:58017"/>
    </ligand>
</feature>
<feature type="binding site" evidence="1">
    <location>
        <position position="89"/>
    </location>
    <ligand>
        <name>Mg(2+)</name>
        <dbReference type="ChEBI" id="CHEBI:18420"/>
    </ligand>
</feature>
<feature type="binding site" evidence="1">
    <location>
        <begin position="92"/>
        <end position="96"/>
    </location>
    <ligand>
        <name>GMP</name>
        <dbReference type="ChEBI" id="CHEBI:58115"/>
    </ligand>
</feature>
<feature type="binding site" evidence="1">
    <location>
        <position position="92"/>
    </location>
    <ligand>
        <name>guanine</name>
        <dbReference type="ChEBI" id="CHEBI:16235"/>
    </ligand>
</feature>
<feature type="binding site" evidence="1">
    <location>
        <position position="92"/>
    </location>
    <ligand>
        <name>xanthine</name>
        <dbReference type="ChEBI" id="CHEBI:17712"/>
    </ligand>
</feature>
<feature type="binding site" evidence="1">
    <location>
        <begin position="134"/>
        <end position="135"/>
    </location>
    <ligand>
        <name>GMP</name>
        <dbReference type="ChEBI" id="CHEBI:58115"/>
    </ligand>
</feature>
<feature type="binding site" evidence="1">
    <location>
        <position position="135"/>
    </location>
    <ligand>
        <name>guanine</name>
        <dbReference type="ChEBI" id="CHEBI:16235"/>
    </ligand>
</feature>
<feature type="binding site" evidence="1">
    <location>
        <position position="135"/>
    </location>
    <ligand>
        <name>xanthine</name>
        <dbReference type="ChEBI" id="CHEBI:17712"/>
    </ligand>
</feature>